<organism>
    <name type="scientific">Chlorobium chlorochromatii (strain CaD3)</name>
    <dbReference type="NCBI Taxonomy" id="340177"/>
    <lineage>
        <taxon>Bacteria</taxon>
        <taxon>Pseudomonadati</taxon>
        <taxon>Chlorobiota</taxon>
        <taxon>Chlorobiia</taxon>
        <taxon>Chlorobiales</taxon>
        <taxon>Chlorobiaceae</taxon>
        <taxon>Chlorobium/Pelodictyon group</taxon>
        <taxon>Chlorobium</taxon>
    </lineage>
</organism>
<accession>Q3API0</accession>
<evidence type="ECO:0000255" key="1">
    <source>
        <dbReference type="HAMAP-Rule" id="MF_01342"/>
    </source>
</evidence>
<evidence type="ECO:0000305" key="2"/>
<gene>
    <name evidence="1" type="primary">rplP</name>
    <name type="ordered locus">Cag_1844</name>
</gene>
<keyword id="KW-0687">Ribonucleoprotein</keyword>
<keyword id="KW-0689">Ribosomal protein</keyword>
<keyword id="KW-0694">RNA-binding</keyword>
<keyword id="KW-0699">rRNA-binding</keyword>
<keyword id="KW-0820">tRNA-binding</keyword>
<sequence>MLMPKRVKYRKTQRGRMKGNAGRGTSVAFGSFGLKAMEPAWITSRQIEAARIAMTRYMKRDGKVWIRIFPDKPVTQKPAETRMGSGKGSPEFWVAVVKPGRVMFEADGVSKEIATEAFRLAAKKLPIKTKFIIRPDYEG</sequence>
<name>RL16_CHLCH</name>
<protein>
    <recommendedName>
        <fullName evidence="1">Large ribosomal subunit protein uL16</fullName>
    </recommendedName>
    <alternativeName>
        <fullName evidence="2">50S ribosomal protein L16</fullName>
    </alternativeName>
</protein>
<comment type="function">
    <text evidence="1">Binds 23S rRNA and is also seen to make contacts with the A and possibly P site tRNAs.</text>
</comment>
<comment type="subunit">
    <text evidence="1">Part of the 50S ribosomal subunit.</text>
</comment>
<comment type="similarity">
    <text evidence="1">Belongs to the universal ribosomal protein uL16 family.</text>
</comment>
<dbReference type="EMBL" id="CP000108">
    <property type="protein sequence ID" value="ABB29095.1"/>
    <property type="molecule type" value="Genomic_DNA"/>
</dbReference>
<dbReference type="SMR" id="Q3API0"/>
<dbReference type="STRING" id="340177.Cag_1844"/>
<dbReference type="KEGG" id="cch:Cag_1844"/>
<dbReference type="eggNOG" id="COG0197">
    <property type="taxonomic scope" value="Bacteria"/>
</dbReference>
<dbReference type="HOGENOM" id="CLU_078858_2_1_10"/>
<dbReference type="OrthoDB" id="9802589at2"/>
<dbReference type="GO" id="GO:0022625">
    <property type="term" value="C:cytosolic large ribosomal subunit"/>
    <property type="evidence" value="ECO:0007669"/>
    <property type="project" value="TreeGrafter"/>
</dbReference>
<dbReference type="GO" id="GO:0019843">
    <property type="term" value="F:rRNA binding"/>
    <property type="evidence" value="ECO:0007669"/>
    <property type="project" value="UniProtKB-UniRule"/>
</dbReference>
<dbReference type="GO" id="GO:0003735">
    <property type="term" value="F:structural constituent of ribosome"/>
    <property type="evidence" value="ECO:0007669"/>
    <property type="project" value="InterPro"/>
</dbReference>
<dbReference type="GO" id="GO:0000049">
    <property type="term" value="F:tRNA binding"/>
    <property type="evidence" value="ECO:0007669"/>
    <property type="project" value="UniProtKB-KW"/>
</dbReference>
<dbReference type="GO" id="GO:0006412">
    <property type="term" value="P:translation"/>
    <property type="evidence" value="ECO:0007669"/>
    <property type="project" value="UniProtKB-UniRule"/>
</dbReference>
<dbReference type="CDD" id="cd01433">
    <property type="entry name" value="Ribosomal_L16_L10e"/>
    <property type="match status" value="1"/>
</dbReference>
<dbReference type="FunFam" id="3.90.1170.10:FF:000001">
    <property type="entry name" value="50S ribosomal protein L16"/>
    <property type="match status" value="1"/>
</dbReference>
<dbReference type="Gene3D" id="3.90.1170.10">
    <property type="entry name" value="Ribosomal protein L10e/L16"/>
    <property type="match status" value="1"/>
</dbReference>
<dbReference type="HAMAP" id="MF_01342">
    <property type="entry name" value="Ribosomal_uL16"/>
    <property type="match status" value="1"/>
</dbReference>
<dbReference type="InterPro" id="IPR047873">
    <property type="entry name" value="Ribosomal_uL16"/>
</dbReference>
<dbReference type="InterPro" id="IPR000114">
    <property type="entry name" value="Ribosomal_uL16_bact-type"/>
</dbReference>
<dbReference type="InterPro" id="IPR020798">
    <property type="entry name" value="Ribosomal_uL16_CS"/>
</dbReference>
<dbReference type="InterPro" id="IPR016180">
    <property type="entry name" value="Ribosomal_uL16_dom"/>
</dbReference>
<dbReference type="InterPro" id="IPR036920">
    <property type="entry name" value="Ribosomal_uL16_sf"/>
</dbReference>
<dbReference type="NCBIfam" id="TIGR01164">
    <property type="entry name" value="rplP_bact"/>
    <property type="match status" value="1"/>
</dbReference>
<dbReference type="PANTHER" id="PTHR12220">
    <property type="entry name" value="50S/60S RIBOSOMAL PROTEIN L16"/>
    <property type="match status" value="1"/>
</dbReference>
<dbReference type="PANTHER" id="PTHR12220:SF13">
    <property type="entry name" value="LARGE RIBOSOMAL SUBUNIT PROTEIN UL16M"/>
    <property type="match status" value="1"/>
</dbReference>
<dbReference type="Pfam" id="PF00252">
    <property type="entry name" value="Ribosomal_L16"/>
    <property type="match status" value="1"/>
</dbReference>
<dbReference type="PRINTS" id="PR00060">
    <property type="entry name" value="RIBOSOMALL16"/>
</dbReference>
<dbReference type="SUPFAM" id="SSF54686">
    <property type="entry name" value="Ribosomal protein L16p/L10e"/>
    <property type="match status" value="1"/>
</dbReference>
<dbReference type="PROSITE" id="PS00586">
    <property type="entry name" value="RIBOSOMAL_L16_1"/>
    <property type="match status" value="1"/>
</dbReference>
<dbReference type="PROSITE" id="PS00701">
    <property type="entry name" value="RIBOSOMAL_L16_2"/>
    <property type="match status" value="1"/>
</dbReference>
<feature type="chain" id="PRO_0000251627" description="Large ribosomal subunit protein uL16">
    <location>
        <begin position="1"/>
        <end position="139"/>
    </location>
</feature>
<proteinExistence type="inferred from homology"/>
<reference key="1">
    <citation type="submission" date="2005-08" db="EMBL/GenBank/DDBJ databases">
        <title>Complete sequence of Chlorobium chlorochromatii CaD3.</title>
        <authorList>
            <consortium name="US DOE Joint Genome Institute"/>
            <person name="Copeland A."/>
            <person name="Lucas S."/>
            <person name="Lapidus A."/>
            <person name="Barry K."/>
            <person name="Detter J.C."/>
            <person name="Glavina T."/>
            <person name="Hammon N."/>
            <person name="Israni S."/>
            <person name="Pitluck S."/>
            <person name="Bryant D."/>
            <person name="Schmutz J."/>
            <person name="Larimer F."/>
            <person name="Land M."/>
            <person name="Kyrpides N."/>
            <person name="Ivanova N."/>
            <person name="Richardson P."/>
        </authorList>
    </citation>
    <scope>NUCLEOTIDE SEQUENCE [LARGE SCALE GENOMIC DNA]</scope>
    <source>
        <strain>CaD3</strain>
    </source>
</reference>